<reference key="1">
    <citation type="submission" date="2007-11" db="EMBL/GenBank/DDBJ databases">
        <authorList>
            <consortium name="The Salmonella enterica serovar Arizonae Genome Sequencing Project"/>
            <person name="McClelland M."/>
            <person name="Sanderson E.K."/>
            <person name="Porwollik S."/>
            <person name="Spieth J."/>
            <person name="Clifton W.S."/>
            <person name="Fulton R."/>
            <person name="Chunyan W."/>
            <person name="Wollam A."/>
            <person name="Shah N."/>
            <person name="Pepin K."/>
            <person name="Bhonagiri V."/>
            <person name="Nash W."/>
            <person name="Johnson M."/>
            <person name="Thiruvilangam P."/>
            <person name="Wilson R."/>
        </authorList>
    </citation>
    <scope>NUCLEOTIDE SEQUENCE [LARGE SCALE GENOMIC DNA]</scope>
    <source>
        <strain>ATCC BAA-731 / CDC346-86 / RSK2980</strain>
    </source>
</reference>
<dbReference type="EMBL" id="CP000880">
    <property type="protein sequence ID" value="ABX19995.1"/>
    <property type="molecule type" value="Genomic_DNA"/>
</dbReference>
<dbReference type="SMR" id="A9MF43"/>
<dbReference type="STRING" id="41514.SARI_00042"/>
<dbReference type="KEGG" id="ses:SARI_00042"/>
<dbReference type="HOGENOM" id="CLU_002472_4_0_6"/>
<dbReference type="Proteomes" id="UP000002084">
    <property type="component" value="Chromosome"/>
</dbReference>
<dbReference type="GO" id="GO:0005829">
    <property type="term" value="C:cytosol"/>
    <property type="evidence" value="ECO:0007669"/>
    <property type="project" value="TreeGrafter"/>
</dbReference>
<dbReference type="GO" id="GO:0005524">
    <property type="term" value="F:ATP binding"/>
    <property type="evidence" value="ECO:0007669"/>
    <property type="project" value="UniProtKB-UniRule"/>
</dbReference>
<dbReference type="GO" id="GO:0140664">
    <property type="term" value="F:ATP-dependent DNA damage sensor activity"/>
    <property type="evidence" value="ECO:0007669"/>
    <property type="project" value="InterPro"/>
</dbReference>
<dbReference type="GO" id="GO:0003684">
    <property type="term" value="F:damaged DNA binding"/>
    <property type="evidence" value="ECO:0007669"/>
    <property type="project" value="UniProtKB-UniRule"/>
</dbReference>
<dbReference type="GO" id="GO:0030983">
    <property type="term" value="F:mismatched DNA binding"/>
    <property type="evidence" value="ECO:0007669"/>
    <property type="project" value="InterPro"/>
</dbReference>
<dbReference type="GO" id="GO:0006298">
    <property type="term" value="P:mismatch repair"/>
    <property type="evidence" value="ECO:0007669"/>
    <property type="project" value="UniProtKB-UniRule"/>
</dbReference>
<dbReference type="CDD" id="cd03284">
    <property type="entry name" value="ABC_MutS1"/>
    <property type="match status" value="1"/>
</dbReference>
<dbReference type="FunFam" id="1.10.1420.10:FF:000002">
    <property type="entry name" value="DNA mismatch repair protein MutS"/>
    <property type="match status" value="1"/>
</dbReference>
<dbReference type="FunFam" id="3.30.420.110:FF:000001">
    <property type="entry name" value="DNA mismatch repair protein MutS"/>
    <property type="match status" value="1"/>
</dbReference>
<dbReference type="FunFam" id="3.40.1170.10:FF:000001">
    <property type="entry name" value="DNA mismatch repair protein MutS"/>
    <property type="match status" value="1"/>
</dbReference>
<dbReference type="FunFam" id="3.40.50.300:FF:000283">
    <property type="entry name" value="DNA mismatch repair protein MutS"/>
    <property type="match status" value="1"/>
</dbReference>
<dbReference type="Gene3D" id="1.10.1420.10">
    <property type="match status" value="2"/>
</dbReference>
<dbReference type="Gene3D" id="6.10.140.430">
    <property type="match status" value="1"/>
</dbReference>
<dbReference type="Gene3D" id="3.40.1170.10">
    <property type="entry name" value="DNA repair protein MutS, domain I"/>
    <property type="match status" value="1"/>
</dbReference>
<dbReference type="Gene3D" id="3.30.420.110">
    <property type="entry name" value="MutS, connector domain"/>
    <property type="match status" value="1"/>
</dbReference>
<dbReference type="Gene3D" id="3.40.50.300">
    <property type="entry name" value="P-loop containing nucleotide triphosphate hydrolases"/>
    <property type="match status" value="1"/>
</dbReference>
<dbReference type="HAMAP" id="MF_00096">
    <property type="entry name" value="MutS"/>
    <property type="match status" value="1"/>
</dbReference>
<dbReference type="InterPro" id="IPR005748">
    <property type="entry name" value="DNA_mismatch_repair_MutS"/>
</dbReference>
<dbReference type="InterPro" id="IPR007695">
    <property type="entry name" value="DNA_mismatch_repair_MutS-lik_N"/>
</dbReference>
<dbReference type="InterPro" id="IPR017261">
    <property type="entry name" value="DNA_mismatch_repair_MutS/MSH"/>
</dbReference>
<dbReference type="InterPro" id="IPR000432">
    <property type="entry name" value="DNA_mismatch_repair_MutS_C"/>
</dbReference>
<dbReference type="InterPro" id="IPR007861">
    <property type="entry name" value="DNA_mismatch_repair_MutS_clamp"/>
</dbReference>
<dbReference type="InterPro" id="IPR007696">
    <property type="entry name" value="DNA_mismatch_repair_MutS_core"/>
</dbReference>
<dbReference type="InterPro" id="IPR016151">
    <property type="entry name" value="DNA_mismatch_repair_MutS_N"/>
</dbReference>
<dbReference type="InterPro" id="IPR036187">
    <property type="entry name" value="DNA_mismatch_repair_MutS_sf"/>
</dbReference>
<dbReference type="InterPro" id="IPR007860">
    <property type="entry name" value="DNA_mmatch_repair_MutS_con_dom"/>
</dbReference>
<dbReference type="InterPro" id="IPR045076">
    <property type="entry name" value="MutS"/>
</dbReference>
<dbReference type="InterPro" id="IPR036678">
    <property type="entry name" value="MutS_con_dom_sf"/>
</dbReference>
<dbReference type="InterPro" id="IPR027417">
    <property type="entry name" value="P-loop_NTPase"/>
</dbReference>
<dbReference type="NCBIfam" id="TIGR01070">
    <property type="entry name" value="mutS1"/>
    <property type="match status" value="1"/>
</dbReference>
<dbReference type="NCBIfam" id="NF003810">
    <property type="entry name" value="PRK05399.1"/>
    <property type="match status" value="1"/>
</dbReference>
<dbReference type="PANTHER" id="PTHR11361:SF34">
    <property type="entry name" value="DNA MISMATCH REPAIR PROTEIN MSH1, MITOCHONDRIAL"/>
    <property type="match status" value="1"/>
</dbReference>
<dbReference type="PANTHER" id="PTHR11361">
    <property type="entry name" value="DNA MISMATCH REPAIR PROTEIN MUTS FAMILY MEMBER"/>
    <property type="match status" value="1"/>
</dbReference>
<dbReference type="Pfam" id="PF01624">
    <property type="entry name" value="MutS_I"/>
    <property type="match status" value="1"/>
</dbReference>
<dbReference type="Pfam" id="PF05188">
    <property type="entry name" value="MutS_II"/>
    <property type="match status" value="1"/>
</dbReference>
<dbReference type="Pfam" id="PF05192">
    <property type="entry name" value="MutS_III"/>
    <property type="match status" value="1"/>
</dbReference>
<dbReference type="Pfam" id="PF05190">
    <property type="entry name" value="MutS_IV"/>
    <property type="match status" value="1"/>
</dbReference>
<dbReference type="Pfam" id="PF00488">
    <property type="entry name" value="MutS_V"/>
    <property type="match status" value="1"/>
</dbReference>
<dbReference type="PIRSF" id="PIRSF037677">
    <property type="entry name" value="DNA_mis_repair_Msh6"/>
    <property type="match status" value="1"/>
</dbReference>
<dbReference type="SMART" id="SM00534">
    <property type="entry name" value="MUTSac"/>
    <property type="match status" value="1"/>
</dbReference>
<dbReference type="SMART" id="SM00533">
    <property type="entry name" value="MUTSd"/>
    <property type="match status" value="1"/>
</dbReference>
<dbReference type="SUPFAM" id="SSF55271">
    <property type="entry name" value="DNA repair protein MutS, domain I"/>
    <property type="match status" value="1"/>
</dbReference>
<dbReference type="SUPFAM" id="SSF53150">
    <property type="entry name" value="DNA repair protein MutS, domain II"/>
    <property type="match status" value="1"/>
</dbReference>
<dbReference type="SUPFAM" id="SSF48334">
    <property type="entry name" value="DNA repair protein MutS, domain III"/>
    <property type="match status" value="1"/>
</dbReference>
<dbReference type="SUPFAM" id="SSF52540">
    <property type="entry name" value="P-loop containing nucleoside triphosphate hydrolases"/>
    <property type="match status" value="1"/>
</dbReference>
<dbReference type="PROSITE" id="PS00486">
    <property type="entry name" value="DNA_MISMATCH_REPAIR_2"/>
    <property type="match status" value="1"/>
</dbReference>
<proteinExistence type="inferred from homology"/>
<organism>
    <name type="scientific">Salmonella arizonae (strain ATCC BAA-731 / CDC346-86 / RSK2980)</name>
    <dbReference type="NCBI Taxonomy" id="41514"/>
    <lineage>
        <taxon>Bacteria</taxon>
        <taxon>Pseudomonadati</taxon>
        <taxon>Pseudomonadota</taxon>
        <taxon>Gammaproteobacteria</taxon>
        <taxon>Enterobacterales</taxon>
        <taxon>Enterobacteriaceae</taxon>
        <taxon>Salmonella</taxon>
    </lineage>
</organism>
<gene>
    <name evidence="1" type="primary">mutS</name>
    <name type="ordered locus">SARI_00042</name>
</gene>
<comment type="function">
    <text evidence="1">This protein is involved in the repair of mismatches in DNA. It is possible that it carries out the mismatch recognition step. This protein has a weak ATPase activity.</text>
</comment>
<comment type="similarity">
    <text evidence="1">Belongs to the DNA mismatch repair MutS family.</text>
</comment>
<keyword id="KW-0067">ATP-binding</keyword>
<keyword id="KW-0227">DNA damage</keyword>
<keyword id="KW-0234">DNA repair</keyword>
<keyword id="KW-0238">DNA-binding</keyword>
<keyword id="KW-0547">Nucleotide-binding</keyword>
<keyword id="KW-1185">Reference proteome</keyword>
<evidence type="ECO:0000255" key="1">
    <source>
        <dbReference type="HAMAP-Rule" id="MF_00096"/>
    </source>
</evidence>
<protein>
    <recommendedName>
        <fullName evidence="1">DNA mismatch repair protein MutS</fullName>
    </recommendedName>
</protein>
<sequence>MSKINMNEDIDKDFSSHTPMMQQYLKLKAQHPEILLFYRMGDFYELFYDDAKRASQLLDISLTKRGASAGEPIPMAGIPHHAVENYLAKLVNQGESVAICEQIGDPATSKGPVERKVVRIVTPGTISDEALLQERQDNLLAAIWQDGKGYGYATLDISSGRFRLSEPADRETMAAELQRTNPAELLYAEDFAEMALIEGRRGLRRRPLWEFEIDTARQQLNLQFGTRDLVGFGVENASRGLCAAGCLLQYVKDTQRTSLPHIRSITMERQQDSIIMDAATRRNLEITQNLAGGIENTLAAVLDCTVTPMGSRMLKRWLHMPIRNTDILRERQQTIGALQDTVSELQPVLRQVGDLERILARLALRTARPRDLARMRHAFQQLPELHAQLETVDSAPVQALRKKMGDFAELRDLLERAIIDAPPVLVRDGGVIAPGYHQELDEWRALADGATDYLDRLEIRERERTGLDTLKVGYNAVHGYYIQISRGQSHLAPINYVRRQTLKNAERYIIPELKEYEDKVLTSKGKALALEKQLYDELFDLLLPHLADLQQSASALAELDVLVNLAERAYTLNYTCPTFTDKPGIRIIEGRHPVVEQVLNEPFIANPLNLSPQRRMLIITGPNMGGKSTYMRQTALIALLAWIGSYVPAQNVEIGPIDRIFTRVGAADDLASGRSTFMVEMTETANILHNATENSLVLMDEIGRGTSTYDGLSLAWACAENLANKIKALTLFATHYFELTQLPEKMEGVANVHLDALEHGDTIAFMHSVQDGAASKSYGLAVAALAGVPKEVIKRARQKLRELESISPNAAATQVDGTQMSLLAAPEETSPAVEALENLDPDSLTPRQALEWIYRLKSLV</sequence>
<accession>A9MF43</accession>
<feature type="chain" id="PRO_0000335223" description="DNA mismatch repair protein MutS">
    <location>
        <begin position="1"/>
        <end position="860"/>
    </location>
</feature>
<feature type="binding site" evidence="1">
    <location>
        <begin position="621"/>
        <end position="628"/>
    </location>
    <ligand>
        <name>ATP</name>
        <dbReference type="ChEBI" id="CHEBI:30616"/>
    </ligand>
</feature>
<name>MUTS_SALAR</name>